<organism>
    <name type="scientific">Invertebrate iridescent virus 6</name>
    <name type="common">IIV-6</name>
    <name type="synonym">Chilo iridescent virus</name>
    <dbReference type="NCBI Taxonomy" id="176652"/>
    <lineage>
        <taxon>Viruses</taxon>
        <taxon>Varidnaviria</taxon>
        <taxon>Bamfordvirae</taxon>
        <taxon>Nucleocytoviricota</taxon>
        <taxon>Megaviricetes</taxon>
        <taxon>Pimascovirales</taxon>
        <taxon>Iridoviridae</taxon>
        <taxon>Betairidovirinae</taxon>
        <taxon>Iridovirus</taxon>
    </lineage>
</organism>
<name>348R_IIV6</name>
<dbReference type="EMBL" id="AF303741">
    <property type="protein sequence ID" value="AAK82209.1"/>
    <property type="molecule type" value="Genomic_DNA"/>
</dbReference>
<dbReference type="RefSeq" id="NP_149811.1">
    <property type="nucleotide sequence ID" value="NC_003038.1"/>
</dbReference>
<dbReference type="KEGG" id="vg:1733162"/>
<dbReference type="OrthoDB" id="40426at10239"/>
<dbReference type="Proteomes" id="UP000001359">
    <property type="component" value="Genome"/>
</dbReference>
<keyword id="KW-1185">Reference proteome</keyword>
<reference key="1">
    <citation type="journal article" date="2001" name="Virology">
        <title>Analysis of the first complete DNA sequence of an invertebrate iridovirus: coding strategy of the genome of Chilo iridescent virus.</title>
        <authorList>
            <person name="Jakob N.J."/>
            <person name="Mueller K."/>
            <person name="Bahr U."/>
            <person name="Darai G."/>
        </authorList>
    </citation>
    <scope>NUCLEOTIDE SEQUENCE [LARGE SCALE GENOMIC DNA]</scope>
</reference>
<reference key="2">
    <citation type="journal article" date="2007" name="Virol. J.">
        <title>Comparative genomic analysis of the family Iridoviridae: re-annotating and defining the core set of iridovirus genes.</title>
        <authorList>
            <person name="Eaton H.E."/>
            <person name="Metcalf J."/>
            <person name="Penny E."/>
            <person name="Tcherepanov V."/>
            <person name="Upton C."/>
            <person name="Brunetti C.R."/>
        </authorList>
    </citation>
    <scope>GENOME REANNOTATION</scope>
</reference>
<sequence>MTHKYQILYDTLISKINASTNLEINELPILDDDGYDIMYQLYDMFMKKHNLPIKKFIIEEEENKDFDTITFDFKNMPNELKLLLYIFAETHYKALNNL</sequence>
<proteinExistence type="predicted"/>
<feature type="chain" id="PRO_0000377865" description="Uncharacterized protein 348R">
    <location>
        <begin position="1"/>
        <end position="98"/>
    </location>
</feature>
<organismHost>
    <name type="scientific">Acheta domesticus</name>
    <name type="common">House cricket</name>
    <dbReference type="NCBI Taxonomy" id="6997"/>
</organismHost>
<organismHost>
    <name type="scientific">Chilo suppressalis</name>
    <name type="common">Asiatic rice borer moth</name>
    <dbReference type="NCBI Taxonomy" id="168631"/>
</organismHost>
<organismHost>
    <name type="scientific">Gryllus bimaculatus</name>
    <name type="common">Two-spotted cricket</name>
    <dbReference type="NCBI Taxonomy" id="6999"/>
</organismHost>
<organismHost>
    <name type="scientific">Gryllus campestris</name>
    <dbReference type="NCBI Taxonomy" id="58607"/>
</organismHost>
<organismHost>
    <name type="scientific">Spodoptera frugiperda</name>
    <name type="common">Fall armyworm</name>
    <dbReference type="NCBI Taxonomy" id="7108"/>
</organismHost>
<accession>Q91FH6</accession>
<gene>
    <name type="ORF">IIV6-348R</name>
</gene>
<protein>
    <recommendedName>
        <fullName>Uncharacterized protein 348R</fullName>
    </recommendedName>
</protein>